<protein>
    <recommendedName>
        <fullName evidence="1">Photosystem II protein D1</fullName>
        <shortName evidence="1">PSII D1 protein</shortName>
        <ecNumber evidence="1">1.10.3.9</ecNumber>
    </recommendedName>
    <alternativeName>
        <fullName evidence="1">Photosystem II Q(B) protein</fullName>
    </alternativeName>
</protein>
<evidence type="ECO:0000255" key="1">
    <source>
        <dbReference type="HAMAP-Rule" id="MF_01379"/>
    </source>
</evidence>
<geneLocation type="chloroplast"/>
<reference key="1">
    <citation type="journal article" date="1991" name="Curr. Genet.">
        <title>Evidence for multiple xenogenous origins of plastids: comparison of psbA-genes with a xanthophyte sequence.</title>
        <authorList>
            <person name="Scherer S."/>
            <person name="Herrmann G."/>
            <person name="Hirschberg J."/>
            <person name="Boerger P."/>
        </authorList>
    </citation>
    <scope>NUCLEOTIDE SEQUENCE [GENOMIC DNA]</scope>
    <source>
        <strain>Vischer</strain>
    </source>
</reference>
<sequence>MTATLERRESISLWERFCSWITSTENRLYIGWFGVLMIPTLLTATTCYIIAFIAAPPVDIDGIREPVAGSLLYGNNIISGAVIPSSNAIGVHFYPVWEAASVDEWLYNGGPYQLIVLHFLLGVASYMGREWELSYRLGMRPWIFVAFSAPVAAASAVFLVYPIGQGSFSDGMPLGISGTFNFMLVFQAEHNILMHPFHMAGVAGVFGGSLFSAMHGSLVTSSLIRETSEVESTNYGYKFGQEEETYNIVAAHGYFGRLIFQYASFNNSRALHFFLAAWPVVRIWLTALGVTTMAFNLNGFNFNQSVVDSQGRVINTWADIINRADLGMEVMHERNAHNFPLDLAAGEVLPVAVSAPAVHA</sequence>
<name>PSBA_BUMFI</name>
<feature type="chain" id="PRO_0000090427" description="Photosystem II protein D1" evidence="1">
    <location>
        <begin position="1"/>
        <end position="344"/>
    </location>
</feature>
<feature type="propeptide" id="PRO_0000316515" evidence="1">
    <location>
        <begin position="345"/>
        <end position="360"/>
    </location>
</feature>
<feature type="transmembrane region" description="Helical" evidence="1">
    <location>
        <begin position="29"/>
        <end position="46"/>
    </location>
</feature>
<feature type="transmembrane region" description="Helical" evidence="1">
    <location>
        <begin position="118"/>
        <end position="133"/>
    </location>
</feature>
<feature type="transmembrane region" description="Helical" evidence="1">
    <location>
        <begin position="142"/>
        <end position="156"/>
    </location>
</feature>
<feature type="transmembrane region" description="Helical" evidence="1">
    <location>
        <begin position="197"/>
        <end position="218"/>
    </location>
</feature>
<feature type="transmembrane region" description="Helical" evidence="1">
    <location>
        <begin position="274"/>
        <end position="288"/>
    </location>
</feature>
<feature type="binding site" description="axial binding residue" evidence="1">
    <location>
        <position position="118"/>
    </location>
    <ligand>
        <name>chlorophyll a</name>
        <dbReference type="ChEBI" id="CHEBI:58416"/>
        <label>ChlzD1</label>
    </ligand>
    <ligandPart>
        <name>Mg</name>
        <dbReference type="ChEBI" id="CHEBI:25107"/>
    </ligandPart>
</feature>
<feature type="binding site" evidence="1">
    <location>
        <position position="126"/>
    </location>
    <ligand>
        <name>pheophytin a</name>
        <dbReference type="ChEBI" id="CHEBI:136840"/>
        <label>D1</label>
    </ligand>
</feature>
<feature type="binding site" evidence="1">
    <location>
        <position position="170"/>
    </location>
    <ligand>
        <name>[CaMn4O5] cluster</name>
        <dbReference type="ChEBI" id="CHEBI:189552"/>
    </ligand>
</feature>
<feature type="binding site" evidence="1">
    <location>
        <position position="189"/>
    </location>
    <ligand>
        <name>[CaMn4O5] cluster</name>
        <dbReference type="ChEBI" id="CHEBI:189552"/>
    </ligand>
</feature>
<feature type="binding site" description="axial binding residue" evidence="1">
    <location>
        <position position="198"/>
    </location>
    <ligand>
        <name>chlorophyll a</name>
        <dbReference type="ChEBI" id="CHEBI:58416"/>
        <label>PD1</label>
    </ligand>
    <ligandPart>
        <name>Mg</name>
        <dbReference type="ChEBI" id="CHEBI:25107"/>
    </ligandPart>
</feature>
<feature type="binding site" evidence="1">
    <location>
        <position position="215"/>
    </location>
    <ligand>
        <name>a quinone</name>
        <dbReference type="ChEBI" id="CHEBI:132124"/>
        <label>B</label>
    </ligand>
</feature>
<feature type="binding site" evidence="1">
    <location>
        <position position="215"/>
    </location>
    <ligand>
        <name>Fe cation</name>
        <dbReference type="ChEBI" id="CHEBI:24875"/>
        <note>ligand shared with heterodimeric partner</note>
    </ligand>
</feature>
<feature type="binding site" evidence="1">
    <location>
        <begin position="264"/>
        <end position="265"/>
    </location>
    <ligand>
        <name>a quinone</name>
        <dbReference type="ChEBI" id="CHEBI:132124"/>
        <label>B</label>
    </ligand>
</feature>
<feature type="binding site" evidence="1">
    <location>
        <position position="272"/>
    </location>
    <ligand>
        <name>Fe cation</name>
        <dbReference type="ChEBI" id="CHEBI:24875"/>
        <note>ligand shared with heterodimeric partner</note>
    </ligand>
</feature>
<feature type="binding site" evidence="1">
    <location>
        <position position="332"/>
    </location>
    <ligand>
        <name>[CaMn4O5] cluster</name>
        <dbReference type="ChEBI" id="CHEBI:189552"/>
    </ligand>
</feature>
<feature type="binding site" evidence="1">
    <location>
        <position position="333"/>
    </location>
    <ligand>
        <name>[CaMn4O5] cluster</name>
        <dbReference type="ChEBI" id="CHEBI:189552"/>
    </ligand>
</feature>
<feature type="binding site" evidence="1">
    <location>
        <position position="342"/>
    </location>
    <ligand>
        <name>[CaMn4O5] cluster</name>
        <dbReference type="ChEBI" id="CHEBI:189552"/>
    </ligand>
</feature>
<feature type="binding site" evidence="1">
    <location>
        <position position="344"/>
    </location>
    <ligand>
        <name>[CaMn4O5] cluster</name>
        <dbReference type="ChEBI" id="CHEBI:189552"/>
    </ligand>
</feature>
<feature type="site" description="Tyrosine radical intermediate" evidence="1">
    <location>
        <position position="161"/>
    </location>
</feature>
<feature type="site" description="Stabilizes free radical intermediate" evidence="1">
    <location>
        <position position="190"/>
    </location>
</feature>
<feature type="site" description="Cleavage; by CTPA" evidence="1">
    <location>
        <begin position="344"/>
        <end position="345"/>
    </location>
</feature>
<gene>
    <name evidence="1" type="primary">psbA</name>
</gene>
<keyword id="KW-0106">Calcium</keyword>
<keyword id="KW-0148">Chlorophyll</keyword>
<keyword id="KW-0150">Chloroplast</keyword>
<keyword id="KW-0157">Chromophore</keyword>
<keyword id="KW-0249">Electron transport</keyword>
<keyword id="KW-0359">Herbicide resistance</keyword>
<keyword id="KW-0408">Iron</keyword>
<keyword id="KW-0460">Magnesium</keyword>
<keyword id="KW-0464">Manganese</keyword>
<keyword id="KW-0472">Membrane</keyword>
<keyword id="KW-0479">Metal-binding</keyword>
<keyword id="KW-0560">Oxidoreductase</keyword>
<keyword id="KW-0602">Photosynthesis</keyword>
<keyword id="KW-0604">Photosystem II</keyword>
<keyword id="KW-0934">Plastid</keyword>
<keyword id="KW-0793">Thylakoid</keyword>
<keyword id="KW-0812">Transmembrane</keyword>
<keyword id="KW-1133">Transmembrane helix</keyword>
<keyword id="KW-0813">Transport</keyword>
<proteinExistence type="inferred from homology"/>
<comment type="function">
    <text evidence="1">Photosystem II (PSII) is a light-driven water:plastoquinone oxidoreductase that uses light energy to abstract electrons from H(2)O, generating O(2) and a proton gradient subsequently used for ATP formation. It consists of a core antenna complex that captures photons, and an electron transfer chain that converts photonic excitation into a charge separation. The D1/D2 (PsbA/PsbD) reaction center heterodimer binds P680, the primary electron donor of PSII as well as several subsequent electron acceptors.</text>
</comment>
<comment type="catalytic activity">
    <reaction evidence="1">
        <text>2 a plastoquinone + 4 hnu + 2 H2O = 2 a plastoquinol + O2</text>
        <dbReference type="Rhea" id="RHEA:36359"/>
        <dbReference type="Rhea" id="RHEA-COMP:9561"/>
        <dbReference type="Rhea" id="RHEA-COMP:9562"/>
        <dbReference type="ChEBI" id="CHEBI:15377"/>
        <dbReference type="ChEBI" id="CHEBI:15379"/>
        <dbReference type="ChEBI" id="CHEBI:17757"/>
        <dbReference type="ChEBI" id="CHEBI:30212"/>
        <dbReference type="ChEBI" id="CHEBI:62192"/>
        <dbReference type="EC" id="1.10.3.9"/>
    </reaction>
</comment>
<comment type="cofactor">
    <text evidence="1">The D1/D2 heterodimer binds P680, chlorophylls that are the primary electron donor of PSII, and subsequent electron acceptors. It shares a non-heme iron and each subunit binds pheophytin, quinone, additional chlorophylls, carotenoids and lipids. D1 provides most of the ligands for the Mn4-Ca-O5 cluster of the oxygen-evolving complex (OEC). There is also a Cl(-1) ion associated with D1 and D2, which is required for oxygen evolution. The PSII complex binds additional chlorophylls, carotenoids and specific lipids.</text>
</comment>
<comment type="subunit">
    <text evidence="1">PSII is composed of 1 copy each of membrane proteins PsbA, PsbB, PsbC, PsbD, PsbE, PsbF, PsbH, PsbI, PsbJ, PsbK, PsbL, PsbM, PsbT, PsbX, PsbY, PsbZ, Psb30/Ycf12, at least 3 peripheral proteins of the oxygen-evolving complex and a large number of cofactors. It forms dimeric complexes.</text>
</comment>
<comment type="subcellular location">
    <subcellularLocation>
        <location evidence="1">Plastid</location>
        <location evidence="1">Chloroplast thylakoid membrane</location>
        <topology evidence="1">Multi-pass membrane protein</topology>
    </subcellularLocation>
</comment>
<comment type="PTM">
    <text evidence="1">Tyr-161 forms a radical intermediate that is referred to as redox-active TyrZ, YZ or Y-Z.</text>
</comment>
<comment type="PTM">
    <text evidence="1">C-terminally processed by CTPA; processing is essential to allow assembly of the oxygen-evolving complex and thus photosynthetic growth.</text>
</comment>
<comment type="miscellaneous">
    <text evidence="1">2 of the reaction center chlorophylls (ChlD1 and ChlD2) are entirely coordinated by water.</text>
</comment>
<comment type="miscellaneous">
    <text evidence="1">Herbicides such as atrazine, BNT, diuron or ioxynil bind in the Q(B) binding site and block subsequent electron transfer.</text>
</comment>
<comment type="similarity">
    <text evidence="1">Belongs to the reaction center PufL/M/PsbA/D family.</text>
</comment>
<organism>
    <name type="scientific">Bumilleriopsis filiformis</name>
    <name type="common">Yellow-green alga</name>
    <dbReference type="NCBI Taxonomy" id="2835"/>
    <lineage>
        <taxon>Eukaryota</taxon>
        <taxon>Sar</taxon>
        <taxon>Stramenopiles</taxon>
        <taxon>Ochrophyta</taxon>
        <taxon>PX clade</taxon>
        <taxon>Xanthophyceae</taxon>
        <taxon>Mischococcales</taxon>
        <taxon>Centritractaceae</taxon>
        <taxon>Bumilleriopsis</taxon>
    </lineage>
</organism>
<accession>P48265</accession>
<dbReference type="EC" id="1.10.3.9" evidence="1"/>
<dbReference type="EMBL" id="X79223">
    <property type="protein sequence ID" value="CAA55807.1"/>
    <property type="molecule type" value="Genomic_DNA"/>
</dbReference>
<dbReference type="SMR" id="P48265"/>
<dbReference type="GO" id="GO:0009535">
    <property type="term" value="C:chloroplast thylakoid membrane"/>
    <property type="evidence" value="ECO:0007669"/>
    <property type="project" value="UniProtKB-SubCell"/>
</dbReference>
<dbReference type="GO" id="GO:0009523">
    <property type="term" value="C:photosystem II"/>
    <property type="evidence" value="ECO:0007669"/>
    <property type="project" value="UniProtKB-KW"/>
</dbReference>
<dbReference type="GO" id="GO:0016168">
    <property type="term" value="F:chlorophyll binding"/>
    <property type="evidence" value="ECO:0007669"/>
    <property type="project" value="UniProtKB-UniRule"/>
</dbReference>
<dbReference type="GO" id="GO:0045156">
    <property type="term" value="F:electron transporter, transferring electrons within the cyclic electron transport pathway of photosynthesis activity"/>
    <property type="evidence" value="ECO:0007669"/>
    <property type="project" value="InterPro"/>
</dbReference>
<dbReference type="GO" id="GO:0005506">
    <property type="term" value="F:iron ion binding"/>
    <property type="evidence" value="ECO:0007669"/>
    <property type="project" value="UniProtKB-UniRule"/>
</dbReference>
<dbReference type="GO" id="GO:0016682">
    <property type="term" value="F:oxidoreductase activity, acting on diphenols and related substances as donors, oxygen as acceptor"/>
    <property type="evidence" value="ECO:0007669"/>
    <property type="project" value="UniProtKB-UniRule"/>
</dbReference>
<dbReference type="GO" id="GO:0009772">
    <property type="term" value="P:photosynthetic electron transport in photosystem II"/>
    <property type="evidence" value="ECO:0007669"/>
    <property type="project" value="InterPro"/>
</dbReference>
<dbReference type="GO" id="GO:0009635">
    <property type="term" value="P:response to herbicide"/>
    <property type="evidence" value="ECO:0007669"/>
    <property type="project" value="UniProtKB-KW"/>
</dbReference>
<dbReference type="CDD" id="cd09289">
    <property type="entry name" value="Photosystem-II_D1"/>
    <property type="match status" value="1"/>
</dbReference>
<dbReference type="FunFam" id="1.20.85.10:FF:000002">
    <property type="entry name" value="Photosystem II protein D1"/>
    <property type="match status" value="1"/>
</dbReference>
<dbReference type="Gene3D" id="1.20.85.10">
    <property type="entry name" value="Photosystem II protein D1-like"/>
    <property type="match status" value="1"/>
</dbReference>
<dbReference type="HAMAP" id="MF_01379">
    <property type="entry name" value="PSII_PsbA_D1"/>
    <property type="match status" value="1"/>
</dbReference>
<dbReference type="InterPro" id="IPR055266">
    <property type="entry name" value="D1/D2"/>
</dbReference>
<dbReference type="InterPro" id="IPR036854">
    <property type="entry name" value="Photo_II_D1/D2_sf"/>
</dbReference>
<dbReference type="InterPro" id="IPR000484">
    <property type="entry name" value="Photo_RC_L/M"/>
</dbReference>
<dbReference type="InterPro" id="IPR055265">
    <property type="entry name" value="Photo_RC_L/M_CS"/>
</dbReference>
<dbReference type="InterPro" id="IPR005867">
    <property type="entry name" value="PSII_D1"/>
</dbReference>
<dbReference type="NCBIfam" id="TIGR01151">
    <property type="entry name" value="psbA"/>
    <property type="match status" value="1"/>
</dbReference>
<dbReference type="PANTHER" id="PTHR33149:SF12">
    <property type="entry name" value="PHOTOSYSTEM II D2 PROTEIN"/>
    <property type="match status" value="1"/>
</dbReference>
<dbReference type="PANTHER" id="PTHR33149">
    <property type="entry name" value="PHOTOSYSTEM II PROTEIN D1"/>
    <property type="match status" value="1"/>
</dbReference>
<dbReference type="Pfam" id="PF00124">
    <property type="entry name" value="Photo_RC"/>
    <property type="match status" value="1"/>
</dbReference>
<dbReference type="PRINTS" id="PR00256">
    <property type="entry name" value="REACTNCENTRE"/>
</dbReference>
<dbReference type="SUPFAM" id="SSF81483">
    <property type="entry name" value="Bacterial photosystem II reaction centre, L and M subunits"/>
    <property type="match status" value="1"/>
</dbReference>
<dbReference type="PROSITE" id="PS00244">
    <property type="entry name" value="REACTION_CENTER"/>
    <property type="match status" value="1"/>
</dbReference>